<organism>
    <name type="scientific">Shigella flexneri</name>
    <dbReference type="NCBI Taxonomy" id="623"/>
    <lineage>
        <taxon>Bacteria</taxon>
        <taxon>Pseudomonadati</taxon>
        <taxon>Pseudomonadota</taxon>
        <taxon>Gammaproteobacteria</taxon>
        <taxon>Enterobacterales</taxon>
        <taxon>Enterobacteriaceae</taxon>
        <taxon>Shigella</taxon>
    </lineage>
</organism>
<gene>
    <name evidence="2" type="primary">hdeB</name>
    <name type="ordered locus">SF3543</name>
    <name type="ordered locus">S4224</name>
</gene>
<sequence>MNISSLRKAFIFMGAVAALSLVNAQSALAANESAKDMTCQEFIDLNPKAMTPVAWWMLHEETVYKGGDTVTLNETDLTQIPKVIEYCKKNPQKNLYTFKNQASNDLPN</sequence>
<evidence type="ECO:0000250" key="1"/>
<evidence type="ECO:0000255" key="2">
    <source>
        <dbReference type="HAMAP-Rule" id="MF_00947"/>
    </source>
</evidence>
<evidence type="ECO:0000305" key="3"/>
<accession>P0AET4</accession>
<accession>P26605</accession>
<feature type="signal peptide" evidence="2">
    <location>
        <begin position="1"/>
        <end position="29"/>
    </location>
</feature>
<feature type="chain" id="PRO_0000045103" description="Acid stress chaperone HdeB">
    <location>
        <begin position="30"/>
        <end position="108"/>
    </location>
</feature>
<feature type="modified residue" description="N6-acetyllysine" evidence="1">
    <location>
        <position position="93"/>
    </location>
</feature>
<comment type="function">
    <text evidence="2">Required for optimal acid stress protection, which is important for survival of enteric bacteria in the acidic environment of the host stomach. Exhibits a chaperone-like activity at acidic pH by preventing the aggregation of many different periplasmic proteins.</text>
</comment>
<comment type="subcellular location">
    <subcellularLocation>
        <location evidence="2">Periplasm</location>
    </subcellularLocation>
</comment>
<comment type="similarity">
    <text evidence="2">Belongs to the HdeB family.</text>
</comment>
<comment type="sequence caution" evidence="3">
    <conflict type="erroneous initiation">
        <sequence resource="EMBL-CDS" id="AAN44998"/>
    </conflict>
    <text>Extended N-terminus.</text>
</comment>
<comment type="sequence caution" evidence="3">
    <conflict type="erroneous initiation">
        <sequence resource="EMBL-CDS" id="AAP19188"/>
    </conflict>
    <text>Extended N-terminus.</text>
</comment>
<name>HDEB_SHIFL</name>
<proteinExistence type="inferred from homology"/>
<dbReference type="EMBL" id="AE005674">
    <property type="protein sequence ID" value="AAN44998.1"/>
    <property type="status" value="ALT_INIT"/>
    <property type="molecule type" value="Genomic_DNA"/>
</dbReference>
<dbReference type="EMBL" id="AE014073">
    <property type="protein sequence ID" value="AAP19188.1"/>
    <property type="status" value="ALT_INIT"/>
    <property type="molecule type" value="Genomic_DNA"/>
</dbReference>
<dbReference type="RefSeq" id="NP_709291.1">
    <property type="nucleotide sequence ID" value="NC_004337.2"/>
</dbReference>
<dbReference type="RefSeq" id="WP_001298717.1">
    <property type="nucleotide sequence ID" value="NZ_WPGW01000225.1"/>
</dbReference>
<dbReference type="SMR" id="P0AET4"/>
<dbReference type="STRING" id="198214.SF3543"/>
<dbReference type="PaxDb" id="198214-SF3543"/>
<dbReference type="GeneID" id="1026885"/>
<dbReference type="GeneID" id="93778476"/>
<dbReference type="KEGG" id="sfl:SF3543"/>
<dbReference type="KEGG" id="sfx:S4224"/>
<dbReference type="PATRIC" id="fig|198214.7.peg.4173"/>
<dbReference type="HOGENOM" id="CLU_149189_1_0_6"/>
<dbReference type="Proteomes" id="UP000001006">
    <property type="component" value="Chromosome"/>
</dbReference>
<dbReference type="Proteomes" id="UP000002673">
    <property type="component" value="Chromosome"/>
</dbReference>
<dbReference type="GO" id="GO:0042597">
    <property type="term" value="C:periplasmic space"/>
    <property type="evidence" value="ECO:0007669"/>
    <property type="project" value="UniProtKB-SubCell"/>
</dbReference>
<dbReference type="GO" id="GO:0051082">
    <property type="term" value="F:unfolded protein binding"/>
    <property type="evidence" value="ECO:0007669"/>
    <property type="project" value="InterPro"/>
</dbReference>
<dbReference type="GO" id="GO:1990451">
    <property type="term" value="P:cellular stress response to acidic pH"/>
    <property type="evidence" value="ECO:0007669"/>
    <property type="project" value="UniProtKB-UniRule"/>
</dbReference>
<dbReference type="FunFam" id="1.10.890.10:FF:000002">
    <property type="entry name" value="Acid stress chaperone HdeB"/>
    <property type="match status" value="1"/>
</dbReference>
<dbReference type="Gene3D" id="1.10.890.10">
    <property type="entry name" value="HNS-dependent expression A"/>
    <property type="match status" value="1"/>
</dbReference>
<dbReference type="HAMAP" id="MF_00947">
    <property type="entry name" value="HdeB"/>
    <property type="match status" value="1"/>
</dbReference>
<dbReference type="InterPro" id="IPR038303">
    <property type="entry name" value="HdeA/HdeB_sf"/>
</dbReference>
<dbReference type="InterPro" id="IPR028623">
    <property type="entry name" value="HdeB"/>
</dbReference>
<dbReference type="InterPro" id="IPR010486">
    <property type="entry name" value="HNS-dep_expression_A/B"/>
</dbReference>
<dbReference type="NCBIfam" id="NF008599">
    <property type="entry name" value="PRK11566.1"/>
    <property type="match status" value="1"/>
</dbReference>
<dbReference type="Pfam" id="PF06411">
    <property type="entry name" value="HdeA"/>
    <property type="match status" value="1"/>
</dbReference>
<reference key="1">
    <citation type="journal article" date="2002" name="Nucleic Acids Res.">
        <title>Genome sequence of Shigella flexneri 2a: insights into pathogenicity through comparison with genomes of Escherichia coli K12 and O157.</title>
        <authorList>
            <person name="Jin Q."/>
            <person name="Yuan Z."/>
            <person name="Xu J."/>
            <person name="Wang Y."/>
            <person name="Shen Y."/>
            <person name="Lu W."/>
            <person name="Wang J."/>
            <person name="Liu H."/>
            <person name="Yang J."/>
            <person name="Yang F."/>
            <person name="Zhang X."/>
            <person name="Zhang J."/>
            <person name="Yang G."/>
            <person name="Wu H."/>
            <person name="Qu D."/>
            <person name="Dong J."/>
            <person name="Sun L."/>
            <person name="Xue Y."/>
            <person name="Zhao A."/>
            <person name="Gao Y."/>
            <person name="Zhu J."/>
            <person name="Kan B."/>
            <person name="Ding K."/>
            <person name="Chen S."/>
            <person name="Cheng H."/>
            <person name="Yao Z."/>
            <person name="He B."/>
            <person name="Chen R."/>
            <person name="Ma D."/>
            <person name="Qiang B."/>
            <person name="Wen Y."/>
            <person name="Hou Y."/>
            <person name="Yu J."/>
        </authorList>
    </citation>
    <scope>NUCLEOTIDE SEQUENCE [LARGE SCALE GENOMIC DNA]</scope>
    <source>
        <strain>301 / Serotype 2a</strain>
    </source>
</reference>
<reference key="2">
    <citation type="journal article" date="2003" name="Infect. Immun.">
        <title>Complete genome sequence and comparative genomics of Shigella flexneri serotype 2a strain 2457T.</title>
        <authorList>
            <person name="Wei J."/>
            <person name="Goldberg M.B."/>
            <person name="Burland V."/>
            <person name="Venkatesan M.M."/>
            <person name="Deng W."/>
            <person name="Fournier G."/>
            <person name="Mayhew G.F."/>
            <person name="Plunkett G. III"/>
            <person name="Rose D.J."/>
            <person name="Darling A."/>
            <person name="Mau B."/>
            <person name="Perna N.T."/>
            <person name="Payne S.M."/>
            <person name="Runyen-Janecky L.J."/>
            <person name="Zhou S."/>
            <person name="Schwartz D.C."/>
            <person name="Blattner F.R."/>
        </authorList>
    </citation>
    <scope>NUCLEOTIDE SEQUENCE [LARGE SCALE GENOMIC DNA]</scope>
    <source>
        <strain>ATCC 700930 / 2457T / Serotype 2a</strain>
    </source>
</reference>
<protein>
    <recommendedName>
        <fullName evidence="2">Acid stress chaperone HdeB</fullName>
    </recommendedName>
</protein>
<keyword id="KW-0007">Acetylation</keyword>
<keyword id="KW-0143">Chaperone</keyword>
<keyword id="KW-0574">Periplasm</keyword>
<keyword id="KW-1185">Reference proteome</keyword>
<keyword id="KW-0732">Signal</keyword>